<gene>
    <name type="primary">TPP1</name>
    <name type="ordered locus">At2g30440</name>
    <name type="ORF">T6B20.20</name>
</gene>
<dbReference type="EC" id="3.4.21.89"/>
<dbReference type="EMBL" id="Y10477">
    <property type="protein sequence ID" value="CAA71502.1"/>
    <property type="molecule type" value="mRNA"/>
</dbReference>
<dbReference type="EMBL" id="U93215">
    <property type="protein sequence ID" value="AAB63091.1"/>
    <property type="status" value="ALT_SEQ"/>
    <property type="molecule type" value="Genomic_DNA"/>
</dbReference>
<dbReference type="EMBL" id="CP002685">
    <property type="protein sequence ID" value="AEC08389.1"/>
    <property type="molecule type" value="Genomic_DNA"/>
</dbReference>
<dbReference type="EMBL" id="AY128354">
    <property type="protein sequence ID" value="AAM91557.1"/>
    <property type="molecule type" value="mRNA"/>
</dbReference>
<dbReference type="EMBL" id="BT020607">
    <property type="protein sequence ID" value="AAW80880.1"/>
    <property type="molecule type" value="mRNA"/>
</dbReference>
<dbReference type="PIR" id="E84708">
    <property type="entry name" value="E84708"/>
</dbReference>
<dbReference type="SMR" id="O04348"/>
<dbReference type="FunCoup" id="O04348">
    <property type="interactions" value="116"/>
</dbReference>
<dbReference type="STRING" id="3702.O04348"/>
<dbReference type="MEROPS" id="S26.008"/>
<dbReference type="PaxDb" id="3702-AT2G30440.1"/>
<dbReference type="EnsemblPlants" id="AT2G30440.1">
    <property type="protein sequence ID" value="AT2G30440.1"/>
    <property type="gene ID" value="AT2G30440"/>
</dbReference>
<dbReference type="GeneID" id="817595"/>
<dbReference type="Gramene" id="AT2G30440.1">
    <property type="protein sequence ID" value="AT2G30440.1"/>
    <property type="gene ID" value="AT2G30440"/>
</dbReference>
<dbReference type="KEGG" id="ath:AT2G30440"/>
<dbReference type="Araport" id="AT2G30440"/>
<dbReference type="TAIR" id="AT2G30440">
    <property type="gene designation" value="TPP"/>
</dbReference>
<dbReference type="eggNOG" id="KOG0171">
    <property type="taxonomic scope" value="Eukaryota"/>
</dbReference>
<dbReference type="HOGENOM" id="CLU_025235_0_0_1"/>
<dbReference type="InParanoid" id="O04348"/>
<dbReference type="OMA" id="LAYEMKP"/>
<dbReference type="OrthoDB" id="308440at2759"/>
<dbReference type="PhylomeDB" id="O04348"/>
<dbReference type="PRO" id="PR:O04348"/>
<dbReference type="Proteomes" id="UP000006548">
    <property type="component" value="Chromosome 2"/>
</dbReference>
<dbReference type="ExpressionAtlas" id="O04348">
    <property type="expression patterns" value="baseline and differential"/>
</dbReference>
<dbReference type="GO" id="GO:0009534">
    <property type="term" value="C:chloroplast thylakoid"/>
    <property type="evidence" value="ECO:0000314"/>
    <property type="project" value="TAIR"/>
</dbReference>
<dbReference type="GO" id="GO:0009535">
    <property type="term" value="C:chloroplast thylakoid membrane"/>
    <property type="evidence" value="ECO:0007669"/>
    <property type="project" value="UniProtKB-SubCell"/>
</dbReference>
<dbReference type="GO" id="GO:0004175">
    <property type="term" value="F:endopeptidase activity"/>
    <property type="evidence" value="ECO:0000314"/>
    <property type="project" value="TAIR"/>
</dbReference>
<dbReference type="GO" id="GO:0004252">
    <property type="term" value="F:serine-type endopeptidase activity"/>
    <property type="evidence" value="ECO:0007669"/>
    <property type="project" value="UniProtKB-EC"/>
</dbReference>
<dbReference type="GO" id="GO:0006465">
    <property type="term" value="P:signal peptide processing"/>
    <property type="evidence" value="ECO:0000314"/>
    <property type="project" value="TAIR"/>
</dbReference>
<dbReference type="CDD" id="cd06530">
    <property type="entry name" value="S26_SPase_I"/>
    <property type="match status" value="1"/>
</dbReference>
<dbReference type="FunFam" id="2.10.109.10:FF:000012">
    <property type="entry name" value="Peptidase/ serine-type peptidase"/>
    <property type="match status" value="1"/>
</dbReference>
<dbReference type="Gene3D" id="2.10.109.10">
    <property type="entry name" value="Umud Fragment, subunit A"/>
    <property type="match status" value="1"/>
</dbReference>
<dbReference type="InterPro" id="IPR036286">
    <property type="entry name" value="LexA/Signal_pep-like_sf"/>
</dbReference>
<dbReference type="InterPro" id="IPR000223">
    <property type="entry name" value="Pept_S26A_signal_pept_1"/>
</dbReference>
<dbReference type="InterPro" id="IPR019758">
    <property type="entry name" value="Pept_S26A_signal_pept_1_CS"/>
</dbReference>
<dbReference type="InterPro" id="IPR019756">
    <property type="entry name" value="Pept_S26A_signal_pept_1_Ser-AS"/>
</dbReference>
<dbReference type="InterPro" id="IPR019533">
    <property type="entry name" value="Peptidase_S26"/>
</dbReference>
<dbReference type="NCBIfam" id="TIGR02227">
    <property type="entry name" value="sigpep_I_bact"/>
    <property type="match status" value="1"/>
</dbReference>
<dbReference type="PANTHER" id="PTHR43390">
    <property type="entry name" value="SIGNAL PEPTIDASE I"/>
    <property type="match status" value="1"/>
</dbReference>
<dbReference type="PANTHER" id="PTHR43390:SF16">
    <property type="entry name" value="THYLAKOIDAL PROCESSING PEPTIDASE 1, CHLOROPLASTIC"/>
    <property type="match status" value="1"/>
</dbReference>
<dbReference type="Pfam" id="PF10502">
    <property type="entry name" value="Peptidase_S26"/>
    <property type="match status" value="1"/>
</dbReference>
<dbReference type="PRINTS" id="PR00727">
    <property type="entry name" value="LEADERPTASE"/>
</dbReference>
<dbReference type="SUPFAM" id="SSF51306">
    <property type="entry name" value="LexA/Signal peptidase"/>
    <property type="match status" value="1"/>
</dbReference>
<dbReference type="PROSITE" id="PS00501">
    <property type="entry name" value="SPASE_I_1"/>
    <property type="match status" value="1"/>
</dbReference>
<dbReference type="PROSITE" id="PS00761">
    <property type="entry name" value="SPASE_I_3"/>
    <property type="match status" value="1"/>
</dbReference>
<reference key="1">
    <citation type="journal article" date="1998" name="J. Biol. Chem.">
        <title>Characterization of a cDNA encoding the thylakoidal processing peptidase from Arabidopsis thaliana. Implications for the origin and catalytic mechanism of the enzyme.</title>
        <authorList>
            <person name="Chaal B.K."/>
            <person name="Mould R.M."/>
            <person name="Barbrook A.C."/>
            <person name="Gray J.C."/>
            <person name="Howe C.J."/>
        </authorList>
    </citation>
    <scope>NUCLEOTIDE SEQUENCE [MRNA]</scope>
    <scope>FUNCTION</scope>
    <scope>SUBCELLULAR LOCATION</scope>
    <source>
        <strain>cv. Columbia</strain>
    </source>
</reference>
<reference key="2">
    <citation type="journal article" date="1999" name="Nature">
        <title>Sequence and analysis of chromosome 2 of the plant Arabidopsis thaliana.</title>
        <authorList>
            <person name="Lin X."/>
            <person name="Kaul S."/>
            <person name="Rounsley S.D."/>
            <person name="Shea T.P."/>
            <person name="Benito M.-I."/>
            <person name="Town C.D."/>
            <person name="Fujii C.Y."/>
            <person name="Mason T.M."/>
            <person name="Bowman C.L."/>
            <person name="Barnstead M.E."/>
            <person name="Feldblyum T.V."/>
            <person name="Buell C.R."/>
            <person name="Ketchum K.A."/>
            <person name="Lee J.J."/>
            <person name="Ronning C.M."/>
            <person name="Koo H.L."/>
            <person name="Moffat K.S."/>
            <person name="Cronin L.A."/>
            <person name="Shen M."/>
            <person name="Pai G."/>
            <person name="Van Aken S."/>
            <person name="Umayam L."/>
            <person name="Tallon L.J."/>
            <person name="Gill J.E."/>
            <person name="Adams M.D."/>
            <person name="Carrera A.J."/>
            <person name="Creasy T.H."/>
            <person name="Goodman H.M."/>
            <person name="Somerville C.R."/>
            <person name="Copenhaver G.P."/>
            <person name="Preuss D."/>
            <person name="Nierman W.C."/>
            <person name="White O."/>
            <person name="Eisen J.A."/>
            <person name="Salzberg S.L."/>
            <person name="Fraser C.M."/>
            <person name="Venter J.C."/>
        </authorList>
    </citation>
    <scope>NUCLEOTIDE SEQUENCE [LARGE SCALE GENOMIC DNA]</scope>
    <source>
        <strain>cv. Columbia</strain>
    </source>
</reference>
<reference key="3">
    <citation type="journal article" date="2017" name="Plant J.">
        <title>Araport11: a complete reannotation of the Arabidopsis thaliana reference genome.</title>
        <authorList>
            <person name="Cheng C.Y."/>
            <person name="Krishnakumar V."/>
            <person name="Chan A.P."/>
            <person name="Thibaud-Nissen F."/>
            <person name="Schobel S."/>
            <person name="Town C.D."/>
        </authorList>
    </citation>
    <scope>GENOME REANNOTATION</scope>
    <source>
        <strain>cv. Columbia</strain>
    </source>
</reference>
<reference key="4">
    <citation type="journal article" date="2003" name="Science">
        <title>Empirical analysis of transcriptional activity in the Arabidopsis genome.</title>
        <authorList>
            <person name="Yamada K."/>
            <person name="Lim J."/>
            <person name="Dale J.M."/>
            <person name="Chen H."/>
            <person name="Shinn P."/>
            <person name="Palm C.J."/>
            <person name="Southwick A.M."/>
            <person name="Wu H.C."/>
            <person name="Kim C.J."/>
            <person name="Nguyen M."/>
            <person name="Pham P.K."/>
            <person name="Cheuk R.F."/>
            <person name="Karlin-Newmann G."/>
            <person name="Liu S.X."/>
            <person name="Lam B."/>
            <person name="Sakano H."/>
            <person name="Wu T."/>
            <person name="Yu G."/>
            <person name="Miranda M."/>
            <person name="Quach H.L."/>
            <person name="Tripp M."/>
            <person name="Chang C.H."/>
            <person name="Lee J.M."/>
            <person name="Toriumi M.J."/>
            <person name="Chan M.M."/>
            <person name="Tang C.C."/>
            <person name="Onodera C.S."/>
            <person name="Deng J.M."/>
            <person name="Akiyama K."/>
            <person name="Ansari Y."/>
            <person name="Arakawa T."/>
            <person name="Banh J."/>
            <person name="Banno F."/>
            <person name="Bowser L."/>
            <person name="Brooks S.Y."/>
            <person name="Carninci P."/>
            <person name="Chao Q."/>
            <person name="Choy N."/>
            <person name="Enju A."/>
            <person name="Goldsmith A.D."/>
            <person name="Gurjal M."/>
            <person name="Hansen N.F."/>
            <person name="Hayashizaki Y."/>
            <person name="Johnson-Hopson C."/>
            <person name="Hsuan V.W."/>
            <person name="Iida K."/>
            <person name="Karnes M."/>
            <person name="Khan S."/>
            <person name="Koesema E."/>
            <person name="Ishida J."/>
            <person name="Jiang P.X."/>
            <person name="Jones T."/>
            <person name="Kawai J."/>
            <person name="Kamiya A."/>
            <person name="Meyers C."/>
            <person name="Nakajima M."/>
            <person name="Narusaka M."/>
            <person name="Seki M."/>
            <person name="Sakurai T."/>
            <person name="Satou M."/>
            <person name="Tamse R."/>
            <person name="Vaysberg M."/>
            <person name="Wallender E.K."/>
            <person name="Wong C."/>
            <person name="Yamamura Y."/>
            <person name="Yuan S."/>
            <person name="Shinozaki K."/>
            <person name="Davis R.W."/>
            <person name="Theologis A."/>
            <person name="Ecker J.R."/>
        </authorList>
    </citation>
    <scope>NUCLEOTIDE SEQUENCE [LARGE SCALE MRNA]</scope>
    <source>
        <strain>cv. Columbia</strain>
    </source>
</reference>
<reference key="5">
    <citation type="submission" date="2005-02" db="EMBL/GenBank/DDBJ databases">
        <title>Arabidopsis ORF clones.</title>
        <authorList>
            <person name="Cheuk R.F."/>
            <person name="Chen H."/>
            <person name="Kim C.J."/>
            <person name="Shinn P."/>
            <person name="Ecker J.R."/>
        </authorList>
    </citation>
    <scope>NUCLEOTIDE SEQUENCE [LARGE SCALE MRNA]</scope>
    <source>
        <strain>cv. Columbia</strain>
    </source>
</reference>
<feature type="transit peptide" description="Chloroplast" evidence="2">
    <location>
        <begin position="1"/>
        <end position="52"/>
    </location>
</feature>
<feature type="transit peptide" description="Thylakoid" evidence="2">
    <location>
        <begin position="53"/>
        <end status="unknown"/>
    </location>
</feature>
<feature type="chain" id="PRO_0000310734" description="Thylakoidal processing peptidase 1, chloroplastic">
    <location>
        <begin status="unknown"/>
        <end position="340"/>
    </location>
</feature>
<feature type="transmembrane region" description="Helical" evidence="2">
    <location>
        <begin position="155"/>
        <end position="175"/>
    </location>
</feature>
<feature type="topological domain" description="Lumenal, thylakoid" evidence="2">
    <location>
        <begin position="176"/>
        <end position="340"/>
    </location>
</feature>
<feature type="active site" evidence="1">
    <location>
        <position position="184"/>
    </location>
</feature>
<sequence>MAIRITFTYSTHVARNLVGTRVGPGGYCFESLVRPRFFSHKRDFDRSPRNRPASMYGSIARELIGEGSQSPLVMGLISILKSTTGHESSTMNVLGVSSFKASSIIPFLQGSKWIKNPPVIDDVDKGGTVCDDDDDKESRNGGSGWVNKLLSVCSEDAKAAFTAVTVSILFRSALAEPKSIPSTSMYPTLDKGDRVMAEKVSYFFRKPEVSDIVIFKAPPILLEYPEYGYSSNDVFIKRIVASEGDWVEVRDGKLFVNDIVQEEDFVLEPMSYEMEPMFVPKGYVFVLGDNRNKSFDSHNWGPLPIENIVGRSVFRYWPPSKVSDTIYHDQAITRGPVAVS</sequence>
<proteinExistence type="evidence at transcript level"/>
<protein>
    <recommendedName>
        <fullName>Thylakoidal processing peptidase 1, chloroplastic</fullName>
        <ecNumber>3.4.21.89</ecNumber>
    </recommendedName>
    <alternativeName>
        <fullName>Signal peptidase I-1</fullName>
    </alternativeName>
</protein>
<keyword id="KW-0150">Chloroplast</keyword>
<keyword id="KW-0378">Hydrolase</keyword>
<keyword id="KW-0472">Membrane</keyword>
<keyword id="KW-0934">Plastid</keyword>
<keyword id="KW-0645">Protease</keyword>
<keyword id="KW-1185">Reference proteome</keyword>
<keyword id="KW-0793">Thylakoid</keyword>
<keyword id="KW-0809">Transit peptide</keyword>
<keyword id="KW-0812">Transmembrane</keyword>
<keyword id="KW-1133">Transmembrane helix</keyword>
<name>TPP1_ARATH</name>
<evidence type="ECO:0000250" key="1"/>
<evidence type="ECO:0000255" key="2"/>
<evidence type="ECO:0000269" key="3">
    <source>
    </source>
</evidence>
<evidence type="ECO:0000305" key="4"/>
<comment type="function">
    <text evidence="3">Cleaves the thylakoid-transfer domain from a chloroplast protein.</text>
</comment>
<comment type="catalytic activity">
    <reaction>
        <text>Cleavage of hydrophobic, N-terminal signal or leader sequences from secreted and periplasmic proteins.</text>
        <dbReference type="EC" id="3.4.21.89"/>
    </reaction>
</comment>
<comment type="subcellular location">
    <subcellularLocation>
        <location evidence="3">Plastid</location>
        <location evidence="3">Chloroplast thylakoid membrane</location>
        <topology evidence="3">Single-pass membrane protein</topology>
    </subcellularLocation>
    <text evidence="1">located in the non-appressed lamellae of the thylakoid network.</text>
</comment>
<comment type="similarity">
    <text evidence="4">Belongs to the peptidase S26 family.</text>
</comment>
<comment type="sequence caution" evidence="4">
    <conflict type="erroneous gene model prediction">
        <sequence resource="EMBL-CDS" id="AAB63091"/>
    </conflict>
</comment>
<accession>O04348</accession>
<accession>Q7DM64</accession>
<organism>
    <name type="scientific">Arabidopsis thaliana</name>
    <name type="common">Mouse-ear cress</name>
    <dbReference type="NCBI Taxonomy" id="3702"/>
    <lineage>
        <taxon>Eukaryota</taxon>
        <taxon>Viridiplantae</taxon>
        <taxon>Streptophyta</taxon>
        <taxon>Embryophyta</taxon>
        <taxon>Tracheophyta</taxon>
        <taxon>Spermatophyta</taxon>
        <taxon>Magnoliopsida</taxon>
        <taxon>eudicotyledons</taxon>
        <taxon>Gunneridae</taxon>
        <taxon>Pentapetalae</taxon>
        <taxon>rosids</taxon>
        <taxon>malvids</taxon>
        <taxon>Brassicales</taxon>
        <taxon>Brassicaceae</taxon>
        <taxon>Camelineae</taxon>
        <taxon>Arabidopsis</taxon>
    </lineage>
</organism>